<sequence>MTASGGGSTAATGRMPTWKERENNKKRERRRRAIAAKIFTGLRSQGNYKLPKHCDNNEVLKALCLEAGWIVHEDGTTYRKGSRPTETTVPCSSIQLSPQSSAFQSPIPSYQASPSSSSYPSPTRFDPNQSSTYLIPYLQNLASSGNLAPLRISNSAPVTPPISSPRRSNPRLPRWQSSNFPVSAPSSPTRRLHHYTSIPECDESDVSTVDSCRWGNFQSVNVSQTCPPSPTFNLVGKSVSSVGVDVSVKPWEGEKIHDVGIDDLELTLGHNTKGRG</sequence>
<organism>
    <name type="scientific">Arabidopsis thaliana</name>
    <name type="common">Mouse-ear cress</name>
    <dbReference type="NCBI Taxonomy" id="3702"/>
    <lineage>
        <taxon>Eukaryota</taxon>
        <taxon>Viridiplantae</taxon>
        <taxon>Streptophyta</taxon>
        <taxon>Embryophyta</taxon>
        <taxon>Tracheophyta</taxon>
        <taxon>Spermatophyta</taxon>
        <taxon>Magnoliopsida</taxon>
        <taxon>eudicotyledons</taxon>
        <taxon>Gunneridae</taxon>
        <taxon>Pentapetalae</taxon>
        <taxon>rosids</taxon>
        <taxon>malvids</taxon>
        <taxon>Brassicales</taxon>
        <taxon>Brassicaceae</taxon>
        <taxon>Camelineae</taxon>
        <taxon>Arabidopsis</taxon>
    </lineage>
</organism>
<name>BEH1_ARATH</name>
<reference key="1">
    <citation type="journal article" date="2000" name="Nature">
        <title>Sequence and analysis of chromosome 3 of the plant Arabidopsis thaliana.</title>
        <authorList>
            <person name="Salanoubat M."/>
            <person name="Lemcke K."/>
            <person name="Rieger M."/>
            <person name="Ansorge W."/>
            <person name="Unseld M."/>
            <person name="Fartmann B."/>
            <person name="Valle G."/>
            <person name="Bloecker H."/>
            <person name="Perez-Alonso M."/>
            <person name="Obermaier B."/>
            <person name="Delseny M."/>
            <person name="Boutry M."/>
            <person name="Grivell L.A."/>
            <person name="Mache R."/>
            <person name="Puigdomenech P."/>
            <person name="De Simone V."/>
            <person name="Choisne N."/>
            <person name="Artiguenave F."/>
            <person name="Robert C."/>
            <person name="Brottier P."/>
            <person name="Wincker P."/>
            <person name="Cattolico L."/>
            <person name="Weissenbach J."/>
            <person name="Saurin W."/>
            <person name="Quetier F."/>
            <person name="Schaefer M."/>
            <person name="Mueller-Auer S."/>
            <person name="Gabel C."/>
            <person name="Fuchs M."/>
            <person name="Benes V."/>
            <person name="Wurmbach E."/>
            <person name="Drzonek H."/>
            <person name="Erfle H."/>
            <person name="Jordan N."/>
            <person name="Bangert S."/>
            <person name="Wiedelmann R."/>
            <person name="Kranz H."/>
            <person name="Voss H."/>
            <person name="Holland R."/>
            <person name="Brandt P."/>
            <person name="Nyakatura G."/>
            <person name="Vezzi A."/>
            <person name="D'Angelo M."/>
            <person name="Pallavicini A."/>
            <person name="Toppo S."/>
            <person name="Simionati B."/>
            <person name="Conrad A."/>
            <person name="Hornischer K."/>
            <person name="Kauer G."/>
            <person name="Loehnert T.-H."/>
            <person name="Nordsiek G."/>
            <person name="Reichelt J."/>
            <person name="Scharfe M."/>
            <person name="Schoen O."/>
            <person name="Bargues M."/>
            <person name="Terol J."/>
            <person name="Climent J."/>
            <person name="Navarro P."/>
            <person name="Collado C."/>
            <person name="Perez-Perez A."/>
            <person name="Ottenwaelder B."/>
            <person name="Duchemin D."/>
            <person name="Cooke R."/>
            <person name="Laudie M."/>
            <person name="Berger-Llauro C."/>
            <person name="Purnelle B."/>
            <person name="Masuy D."/>
            <person name="de Haan M."/>
            <person name="Maarse A.C."/>
            <person name="Alcaraz J.-P."/>
            <person name="Cottet A."/>
            <person name="Casacuberta E."/>
            <person name="Monfort A."/>
            <person name="Argiriou A."/>
            <person name="Flores M."/>
            <person name="Liguori R."/>
            <person name="Vitale D."/>
            <person name="Mannhaupt G."/>
            <person name="Haase D."/>
            <person name="Schoof H."/>
            <person name="Rudd S."/>
            <person name="Zaccaria P."/>
            <person name="Mewes H.-W."/>
            <person name="Mayer K.F.X."/>
            <person name="Kaul S."/>
            <person name="Town C.D."/>
            <person name="Koo H.L."/>
            <person name="Tallon L.J."/>
            <person name="Jenkins J."/>
            <person name="Rooney T."/>
            <person name="Rizzo M."/>
            <person name="Walts A."/>
            <person name="Utterback T."/>
            <person name="Fujii C.Y."/>
            <person name="Shea T.P."/>
            <person name="Creasy T.H."/>
            <person name="Haas B."/>
            <person name="Maiti R."/>
            <person name="Wu D."/>
            <person name="Peterson J."/>
            <person name="Van Aken S."/>
            <person name="Pai G."/>
            <person name="Militscher J."/>
            <person name="Sellers P."/>
            <person name="Gill J.E."/>
            <person name="Feldblyum T.V."/>
            <person name="Preuss D."/>
            <person name="Lin X."/>
            <person name="Nierman W.C."/>
            <person name="Salzberg S.L."/>
            <person name="White O."/>
            <person name="Venter J.C."/>
            <person name="Fraser C.M."/>
            <person name="Kaneko T."/>
            <person name="Nakamura Y."/>
            <person name="Sato S."/>
            <person name="Kato T."/>
            <person name="Asamizu E."/>
            <person name="Sasamoto S."/>
            <person name="Kimura T."/>
            <person name="Idesawa K."/>
            <person name="Kawashima K."/>
            <person name="Kishida Y."/>
            <person name="Kiyokawa C."/>
            <person name="Kohara M."/>
            <person name="Matsumoto M."/>
            <person name="Matsuno A."/>
            <person name="Muraki A."/>
            <person name="Nakayama S."/>
            <person name="Nakazaki N."/>
            <person name="Shinpo S."/>
            <person name="Takeuchi C."/>
            <person name="Wada T."/>
            <person name="Watanabe A."/>
            <person name="Yamada M."/>
            <person name="Yasuda M."/>
            <person name="Tabata S."/>
        </authorList>
    </citation>
    <scope>NUCLEOTIDE SEQUENCE [LARGE SCALE GENOMIC DNA]</scope>
    <source>
        <strain>cv. Columbia</strain>
    </source>
</reference>
<reference key="2">
    <citation type="journal article" date="2017" name="Plant J.">
        <title>Araport11: a complete reannotation of the Arabidopsis thaliana reference genome.</title>
        <authorList>
            <person name="Cheng C.Y."/>
            <person name="Krishnakumar V."/>
            <person name="Chan A.P."/>
            <person name="Thibaud-Nissen F."/>
            <person name="Schobel S."/>
            <person name="Town C.D."/>
        </authorList>
    </citation>
    <scope>GENOME REANNOTATION</scope>
    <source>
        <strain>cv. Columbia</strain>
    </source>
</reference>
<reference key="3">
    <citation type="journal article" date="2003" name="Science">
        <title>Empirical analysis of transcriptional activity in the Arabidopsis genome.</title>
        <authorList>
            <person name="Yamada K."/>
            <person name="Lim J."/>
            <person name="Dale J.M."/>
            <person name="Chen H."/>
            <person name="Shinn P."/>
            <person name="Palm C.J."/>
            <person name="Southwick A.M."/>
            <person name="Wu H.C."/>
            <person name="Kim C.J."/>
            <person name="Nguyen M."/>
            <person name="Pham P.K."/>
            <person name="Cheuk R.F."/>
            <person name="Karlin-Newmann G."/>
            <person name="Liu S.X."/>
            <person name="Lam B."/>
            <person name="Sakano H."/>
            <person name="Wu T."/>
            <person name="Yu G."/>
            <person name="Miranda M."/>
            <person name="Quach H.L."/>
            <person name="Tripp M."/>
            <person name="Chang C.H."/>
            <person name="Lee J.M."/>
            <person name="Toriumi M.J."/>
            <person name="Chan M.M."/>
            <person name="Tang C.C."/>
            <person name="Onodera C.S."/>
            <person name="Deng J.M."/>
            <person name="Akiyama K."/>
            <person name="Ansari Y."/>
            <person name="Arakawa T."/>
            <person name="Banh J."/>
            <person name="Banno F."/>
            <person name="Bowser L."/>
            <person name="Brooks S.Y."/>
            <person name="Carninci P."/>
            <person name="Chao Q."/>
            <person name="Choy N."/>
            <person name="Enju A."/>
            <person name="Goldsmith A.D."/>
            <person name="Gurjal M."/>
            <person name="Hansen N.F."/>
            <person name="Hayashizaki Y."/>
            <person name="Johnson-Hopson C."/>
            <person name="Hsuan V.W."/>
            <person name="Iida K."/>
            <person name="Karnes M."/>
            <person name="Khan S."/>
            <person name="Koesema E."/>
            <person name="Ishida J."/>
            <person name="Jiang P.X."/>
            <person name="Jones T."/>
            <person name="Kawai J."/>
            <person name="Kamiya A."/>
            <person name="Meyers C."/>
            <person name="Nakajima M."/>
            <person name="Narusaka M."/>
            <person name="Seki M."/>
            <person name="Sakurai T."/>
            <person name="Satou M."/>
            <person name="Tamse R."/>
            <person name="Vaysberg M."/>
            <person name="Wallender E.K."/>
            <person name="Wong C."/>
            <person name="Yamamura Y."/>
            <person name="Yuan S."/>
            <person name="Shinozaki K."/>
            <person name="Davis R.W."/>
            <person name="Theologis A."/>
            <person name="Ecker J.R."/>
        </authorList>
    </citation>
    <scope>NUCLEOTIDE SEQUENCE [LARGE SCALE MRNA]</scope>
    <source>
        <strain>cv. Columbia</strain>
    </source>
</reference>
<reference key="4">
    <citation type="journal article" date="2005" name="Cell">
        <title>A new class of transcription factors mediates brassinosteroid-regulated gene expression in Arabidopsis.</title>
        <authorList>
            <person name="Yin Y."/>
            <person name="Vafeados D."/>
            <person name="Tao Y."/>
            <person name="Yoshida S."/>
            <person name="Asami T."/>
            <person name="Chory J."/>
        </authorList>
    </citation>
    <scope>IDENTIFICATION</scope>
    <scope>PHOSPHORYLATION</scope>
</reference>
<protein>
    <recommendedName>
        <fullName>BES1/BZR1 homolog protein 1</fullName>
    </recommendedName>
</protein>
<dbReference type="EMBL" id="AL049862">
    <property type="protein sequence ID" value="CAB42904.1"/>
    <property type="molecule type" value="Genomic_DNA"/>
</dbReference>
<dbReference type="EMBL" id="AL132979">
    <property type="protein sequence ID" value="CAB62444.1"/>
    <property type="molecule type" value="Genomic_DNA"/>
</dbReference>
<dbReference type="EMBL" id="CP002686">
    <property type="protein sequence ID" value="AEE78704.1"/>
    <property type="molecule type" value="Genomic_DNA"/>
</dbReference>
<dbReference type="EMBL" id="BT002452">
    <property type="protein sequence ID" value="AAO00812.1"/>
    <property type="molecule type" value="mRNA"/>
</dbReference>
<dbReference type="EMBL" id="BT006310">
    <property type="protein sequence ID" value="AAP13418.1"/>
    <property type="molecule type" value="mRNA"/>
</dbReference>
<dbReference type="PIR" id="T46152">
    <property type="entry name" value="T46152"/>
</dbReference>
<dbReference type="RefSeq" id="NP_190644.1">
    <property type="nucleotide sequence ID" value="NM_114935.3"/>
</dbReference>
<dbReference type="SMR" id="Q9S7F3"/>
<dbReference type="FunCoup" id="Q9S7F3">
    <property type="interactions" value="324"/>
</dbReference>
<dbReference type="STRING" id="3702.Q9S7F3"/>
<dbReference type="GlyGen" id="Q9S7F3">
    <property type="glycosylation" value="1 site"/>
</dbReference>
<dbReference type="iPTMnet" id="Q9S7F3"/>
<dbReference type="PaxDb" id="3702-AT3G50750.1"/>
<dbReference type="EnsemblPlants" id="AT3G50750.1">
    <property type="protein sequence ID" value="AT3G50750.1"/>
    <property type="gene ID" value="AT3G50750"/>
</dbReference>
<dbReference type="GeneID" id="824239"/>
<dbReference type="Gramene" id="AT3G50750.1">
    <property type="protein sequence ID" value="AT3G50750.1"/>
    <property type="gene ID" value="AT3G50750"/>
</dbReference>
<dbReference type="KEGG" id="ath:AT3G50750"/>
<dbReference type="Araport" id="AT3G50750"/>
<dbReference type="TAIR" id="AT3G50750">
    <property type="gene designation" value="BEH1"/>
</dbReference>
<dbReference type="eggNOG" id="ENOG502QS1Z">
    <property type="taxonomic scope" value="Eukaryota"/>
</dbReference>
<dbReference type="HOGENOM" id="CLU_036256_0_0_1"/>
<dbReference type="InParanoid" id="Q9S7F3"/>
<dbReference type="OMA" id="TRFDPNH"/>
<dbReference type="OrthoDB" id="775852at2759"/>
<dbReference type="PhylomeDB" id="Q9S7F3"/>
<dbReference type="PRO" id="PR:Q9S7F3"/>
<dbReference type="Proteomes" id="UP000006548">
    <property type="component" value="Chromosome 3"/>
</dbReference>
<dbReference type="ExpressionAtlas" id="Q9S7F3">
    <property type="expression patterns" value="baseline and differential"/>
</dbReference>
<dbReference type="GO" id="GO:0000325">
    <property type="term" value="C:plant-type vacuole"/>
    <property type="evidence" value="ECO:0007005"/>
    <property type="project" value="TAIR"/>
</dbReference>
<dbReference type="GO" id="GO:0003677">
    <property type="term" value="F:DNA binding"/>
    <property type="evidence" value="ECO:0007669"/>
    <property type="project" value="UniProtKB-KW"/>
</dbReference>
<dbReference type="GO" id="GO:0003700">
    <property type="term" value="F:DNA-binding transcription factor activity"/>
    <property type="evidence" value="ECO:0007669"/>
    <property type="project" value="InterPro"/>
</dbReference>
<dbReference type="GO" id="GO:0009742">
    <property type="term" value="P:brassinosteroid mediated signaling pathway"/>
    <property type="evidence" value="ECO:0007669"/>
    <property type="project" value="InterPro"/>
</dbReference>
<dbReference type="GO" id="GO:0006351">
    <property type="term" value="P:DNA-templated transcription"/>
    <property type="evidence" value="ECO:0007669"/>
    <property type="project" value="InterPro"/>
</dbReference>
<dbReference type="GO" id="GO:0006355">
    <property type="term" value="P:regulation of DNA-templated transcription"/>
    <property type="evidence" value="ECO:0000304"/>
    <property type="project" value="TAIR"/>
</dbReference>
<dbReference type="InterPro" id="IPR008540">
    <property type="entry name" value="BES1_N"/>
</dbReference>
<dbReference type="InterPro" id="IPR033264">
    <property type="entry name" value="BZR"/>
</dbReference>
<dbReference type="PANTHER" id="PTHR31506">
    <property type="entry name" value="BES1/BZR1 HOMOLOG PROTEIN 3-RELATED"/>
    <property type="match status" value="1"/>
</dbReference>
<dbReference type="PANTHER" id="PTHR31506:SF49">
    <property type="entry name" value="BES1_BZR1 HOMOLOG PROTEIN 1"/>
    <property type="match status" value="1"/>
</dbReference>
<dbReference type="Pfam" id="PF05687">
    <property type="entry name" value="BES1_N"/>
    <property type="match status" value="1"/>
</dbReference>
<evidence type="ECO:0000250" key="1"/>
<evidence type="ECO:0000250" key="2">
    <source>
        <dbReference type="UniProtKB" id="Q9LN63"/>
    </source>
</evidence>
<evidence type="ECO:0000256" key="3">
    <source>
        <dbReference type="SAM" id="MobiDB-lite"/>
    </source>
</evidence>
<evidence type="ECO:0000269" key="4">
    <source>
    </source>
</evidence>
<evidence type="ECO:0000305" key="5"/>
<comment type="PTM">
    <text evidence="4">Phosphorylated. Phosphorylation increases protein degradation.</text>
</comment>
<comment type="similarity">
    <text evidence="5">Belongs to the BZR/LAT61 family.</text>
</comment>
<keyword id="KW-0238">DNA-binding</keyword>
<keyword id="KW-0597">Phosphoprotein</keyword>
<keyword id="KW-1185">Reference proteome</keyword>
<keyword id="KW-0804">Transcription</keyword>
<keyword id="KW-0805">Transcription regulation</keyword>
<feature type="chain" id="PRO_0000113273" description="BES1/BZR1 homolog protein 1">
    <location>
        <begin position="1"/>
        <end position="276"/>
    </location>
</feature>
<feature type="region of interest" description="Disordered" evidence="3">
    <location>
        <begin position="1"/>
        <end position="30"/>
    </location>
</feature>
<feature type="region of interest" description="Required for DNA-binding" evidence="1">
    <location>
        <begin position="14"/>
        <end position="87"/>
    </location>
</feature>
<feature type="region of interest" description="Disordered" evidence="3">
    <location>
        <begin position="76"/>
        <end position="125"/>
    </location>
</feature>
<feature type="region of interest" description="Disordered" evidence="3">
    <location>
        <begin position="155"/>
        <end position="191"/>
    </location>
</feature>
<feature type="compositionally biased region" description="Polar residues" evidence="3">
    <location>
        <begin position="84"/>
        <end position="103"/>
    </location>
</feature>
<feature type="compositionally biased region" description="Low complexity" evidence="3">
    <location>
        <begin position="104"/>
        <end position="122"/>
    </location>
</feature>
<feature type="compositionally biased region" description="Low complexity" evidence="3">
    <location>
        <begin position="164"/>
        <end position="174"/>
    </location>
</feature>
<feature type="compositionally biased region" description="Polar residues" evidence="3">
    <location>
        <begin position="175"/>
        <end position="189"/>
    </location>
</feature>
<feature type="modified residue" description="Phosphothreonine" evidence="2">
    <location>
        <position position="159"/>
    </location>
</feature>
<proteinExistence type="evidence at protein level"/>
<gene>
    <name type="primary">BEH1</name>
    <name type="ordered locus">At3g50750</name>
    <name type="ORF">F18B3.30</name>
    <name type="ORF">T3A5.130</name>
</gene>
<accession>Q9S7F3</accession>